<proteinExistence type="evidence at protein level"/>
<comment type="subcellular location">
    <subcellularLocation>
        <location evidence="1">Secreted</location>
        <location evidence="1">Cell wall</location>
    </subcellularLocation>
</comment>
<reference evidence="3" key="1">
    <citation type="journal article" date="1997" name="J. Biol. Chem.">
        <title>Differential extraction and protein sequencing reveals major differences in patterns of primary cell wall proteins from plants.</title>
        <authorList>
            <person name="Robertson D."/>
            <person name="Mitchell G.P."/>
            <person name="Gilroy J.S."/>
            <person name="Gerrish C."/>
            <person name="Bolwell G.P."/>
            <person name="Slabas A.R."/>
        </authorList>
    </citation>
    <scope>PROTEIN SEQUENCE</scope>
    <scope>SUBCELLULAR LOCATION</scope>
</reference>
<feature type="chain" id="PRO_0000079709" description="35 kDa cell wall protein">
    <location>
        <begin position="1"/>
        <end position="15" status="greater than"/>
    </location>
</feature>
<feature type="non-terminal residue" evidence="2">
    <location>
        <position position="15"/>
    </location>
</feature>
<protein>
    <recommendedName>
        <fullName>35 kDa cell wall protein</fullName>
    </recommendedName>
</protein>
<sequence>ELQLNYYTKSWXRAE</sequence>
<organism>
    <name type="scientific">Solanum lycopersicum</name>
    <name type="common">Tomato</name>
    <name type="synonym">Lycopersicon esculentum</name>
    <dbReference type="NCBI Taxonomy" id="4081"/>
    <lineage>
        <taxon>Eukaryota</taxon>
        <taxon>Viridiplantae</taxon>
        <taxon>Streptophyta</taxon>
        <taxon>Embryophyta</taxon>
        <taxon>Tracheophyta</taxon>
        <taxon>Spermatophyta</taxon>
        <taxon>Magnoliopsida</taxon>
        <taxon>eudicotyledons</taxon>
        <taxon>Gunneridae</taxon>
        <taxon>Pentapetalae</taxon>
        <taxon>asterids</taxon>
        <taxon>lamiids</taxon>
        <taxon>Solanales</taxon>
        <taxon>Solanaceae</taxon>
        <taxon>Solanoideae</taxon>
        <taxon>Solaneae</taxon>
        <taxon>Solanum</taxon>
        <taxon>Solanum subgen. Lycopersicon</taxon>
    </lineage>
</organism>
<accession>P80823</accession>
<name>CWP27_SOLLC</name>
<dbReference type="InParanoid" id="P80823"/>
<dbReference type="Proteomes" id="UP000004994">
    <property type="component" value="Unplaced"/>
</dbReference>
<dbReference type="GO" id="GO:0005576">
    <property type="term" value="C:extracellular region"/>
    <property type="evidence" value="ECO:0007669"/>
    <property type="project" value="UniProtKB-KW"/>
</dbReference>
<evidence type="ECO:0000269" key="1">
    <source>
    </source>
</evidence>
<evidence type="ECO:0000303" key="2">
    <source>
    </source>
</evidence>
<evidence type="ECO:0000305" key="3"/>
<keyword id="KW-0134">Cell wall</keyword>
<keyword id="KW-0903">Direct protein sequencing</keyword>
<keyword id="KW-1185">Reference proteome</keyword>
<keyword id="KW-0964">Secreted</keyword>